<keyword id="KW-0007">Acetylation</keyword>
<keyword id="KW-0010">Activator</keyword>
<keyword id="KW-0156">Chromatin regulator</keyword>
<keyword id="KW-0158">Chromosome</keyword>
<keyword id="KW-0238">DNA-binding</keyword>
<keyword id="KW-0544">Nucleosome core</keyword>
<keyword id="KW-0539">Nucleus</keyword>
<keyword id="KW-0804">Transcription</keyword>
<keyword id="KW-0805">Transcription regulation</keyword>
<name>H2AZ_CRYNB</name>
<evidence type="ECO:0000250" key="1"/>
<evidence type="ECO:0000256" key="2">
    <source>
        <dbReference type="SAM" id="MobiDB-lite"/>
    </source>
</evidence>
<evidence type="ECO:0000305" key="3"/>
<reference key="1">
    <citation type="journal article" date="2005" name="Science">
        <title>The genome of the basidiomycetous yeast and human pathogen Cryptococcus neoformans.</title>
        <authorList>
            <person name="Loftus B.J."/>
            <person name="Fung E."/>
            <person name="Roncaglia P."/>
            <person name="Rowley D."/>
            <person name="Amedeo P."/>
            <person name="Bruno D."/>
            <person name="Vamathevan J."/>
            <person name="Miranda M."/>
            <person name="Anderson I.J."/>
            <person name="Fraser J.A."/>
            <person name="Allen J.E."/>
            <person name="Bosdet I.E."/>
            <person name="Brent M.R."/>
            <person name="Chiu R."/>
            <person name="Doering T.L."/>
            <person name="Donlin M.J."/>
            <person name="D'Souza C.A."/>
            <person name="Fox D.S."/>
            <person name="Grinberg V."/>
            <person name="Fu J."/>
            <person name="Fukushima M."/>
            <person name="Haas B.J."/>
            <person name="Huang J.C."/>
            <person name="Janbon G."/>
            <person name="Jones S.J.M."/>
            <person name="Koo H.L."/>
            <person name="Krzywinski M.I."/>
            <person name="Kwon-Chung K.J."/>
            <person name="Lengeler K.B."/>
            <person name="Maiti R."/>
            <person name="Marra M.A."/>
            <person name="Marra R.E."/>
            <person name="Mathewson C.A."/>
            <person name="Mitchell T.G."/>
            <person name="Pertea M."/>
            <person name="Riggs F.R."/>
            <person name="Salzberg S.L."/>
            <person name="Schein J.E."/>
            <person name="Shvartsbeyn A."/>
            <person name="Shin H."/>
            <person name="Shumway M."/>
            <person name="Specht C.A."/>
            <person name="Suh B.B."/>
            <person name="Tenney A."/>
            <person name="Utterback T.R."/>
            <person name="Wickes B.L."/>
            <person name="Wortman J.R."/>
            <person name="Wye N.H."/>
            <person name="Kronstad J.W."/>
            <person name="Lodge J.K."/>
            <person name="Heitman J."/>
            <person name="Davis R.W."/>
            <person name="Fraser C.M."/>
            <person name="Hyman R.W."/>
        </authorList>
    </citation>
    <scope>NUCLEOTIDE SEQUENCE [LARGE SCALE GENOMIC DNA]</scope>
    <source>
        <strain>B-3501A</strain>
    </source>
</reference>
<sequence length="138" mass="14714">MSSKVGGGKGGKSKTSSEAKVLTTRSSKAGLQFPVGRIHRFLRNKNANNVRIGAKAAVYVASIMEYLTAEVLELAGNAAKDLRVKRITPRHLQLAIRGDEELDLLIRATIAGGGVLPHIHKSLVAKNAPLKKPKALDA</sequence>
<organism>
    <name type="scientific">Cryptococcus neoformans var. neoformans serotype D (strain B-3501A)</name>
    <name type="common">Filobasidiella neoformans</name>
    <dbReference type="NCBI Taxonomy" id="283643"/>
    <lineage>
        <taxon>Eukaryota</taxon>
        <taxon>Fungi</taxon>
        <taxon>Dikarya</taxon>
        <taxon>Basidiomycota</taxon>
        <taxon>Agaricomycotina</taxon>
        <taxon>Tremellomycetes</taxon>
        <taxon>Tremellales</taxon>
        <taxon>Cryptococcaceae</taxon>
        <taxon>Cryptococcus</taxon>
        <taxon>Cryptococcus neoformans species complex</taxon>
    </lineage>
</organism>
<feature type="chain" id="PRO_0000410105" description="Histone H2A.Z">
    <location>
        <begin position="1"/>
        <end position="138"/>
    </location>
</feature>
<feature type="region of interest" description="Disordered" evidence="2">
    <location>
        <begin position="1"/>
        <end position="21"/>
    </location>
</feature>
<feature type="compositionally biased region" description="Gly residues" evidence="2">
    <location>
        <begin position="1"/>
        <end position="10"/>
    </location>
</feature>
<feature type="modified residue" description="N6-acetyllysine" evidence="1">
    <location>
        <position position="4"/>
    </location>
</feature>
<feature type="modified residue" description="N6-acetyllysine" evidence="1">
    <location>
        <position position="9"/>
    </location>
</feature>
<dbReference type="EMBL" id="AAEY01000046">
    <property type="protein sequence ID" value="EAL18681.1"/>
    <property type="molecule type" value="Genomic_DNA"/>
</dbReference>
<dbReference type="RefSeq" id="XP_773328.1">
    <property type="nucleotide sequence ID" value="XM_768235.1"/>
</dbReference>
<dbReference type="SMR" id="P0CO01"/>
<dbReference type="EnsemblFungi" id="AAW46445">
    <property type="protein sequence ID" value="AAW46445"/>
    <property type="gene ID" value="CNL04080"/>
</dbReference>
<dbReference type="GeneID" id="4938229"/>
<dbReference type="KEGG" id="cnb:CNBI2690"/>
<dbReference type="VEuPathDB" id="FungiDB:CNBI2690"/>
<dbReference type="HOGENOM" id="CLU_062828_2_1_1"/>
<dbReference type="OrthoDB" id="5767at5206"/>
<dbReference type="GO" id="GO:0000791">
    <property type="term" value="C:euchromatin"/>
    <property type="evidence" value="ECO:0007669"/>
    <property type="project" value="EnsemblFungi"/>
</dbReference>
<dbReference type="GO" id="GO:0000786">
    <property type="term" value="C:nucleosome"/>
    <property type="evidence" value="ECO:0007669"/>
    <property type="project" value="UniProtKB-KW"/>
</dbReference>
<dbReference type="GO" id="GO:0005634">
    <property type="term" value="C:nucleus"/>
    <property type="evidence" value="ECO:0007669"/>
    <property type="project" value="UniProtKB-SubCell"/>
</dbReference>
<dbReference type="GO" id="GO:0031490">
    <property type="term" value="F:chromatin DNA binding"/>
    <property type="evidence" value="ECO:0007669"/>
    <property type="project" value="EnsemblFungi"/>
</dbReference>
<dbReference type="GO" id="GO:0042802">
    <property type="term" value="F:identical protein binding"/>
    <property type="evidence" value="ECO:0007669"/>
    <property type="project" value="EnsemblFungi"/>
</dbReference>
<dbReference type="GO" id="GO:0046982">
    <property type="term" value="F:protein heterodimerization activity"/>
    <property type="evidence" value="ECO:0007669"/>
    <property type="project" value="InterPro"/>
</dbReference>
<dbReference type="GO" id="GO:0000978">
    <property type="term" value="F:RNA polymerase II cis-regulatory region sequence-specific DNA binding"/>
    <property type="evidence" value="ECO:0007669"/>
    <property type="project" value="EnsemblFungi"/>
</dbReference>
<dbReference type="GO" id="GO:0030527">
    <property type="term" value="F:structural constituent of chromatin"/>
    <property type="evidence" value="ECO:0007669"/>
    <property type="project" value="InterPro"/>
</dbReference>
<dbReference type="GO" id="GO:0140898">
    <property type="term" value="P:CENP-A eviction from euchromatin"/>
    <property type="evidence" value="ECO:0007669"/>
    <property type="project" value="EnsemblFungi"/>
</dbReference>
<dbReference type="GO" id="GO:0070481">
    <property type="term" value="P:nuclear-transcribed mRNA catabolic process, non-stop decay"/>
    <property type="evidence" value="ECO:0007669"/>
    <property type="project" value="EnsemblFungi"/>
</dbReference>
<dbReference type="GO" id="GO:0006357">
    <property type="term" value="P:regulation of transcription by RNA polymerase II"/>
    <property type="evidence" value="ECO:0007669"/>
    <property type="project" value="EnsemblFungi"/>
</dbReference>
<dbReference type="GO" id="GO:0030466">
    <property type="term" value="P:silent mating-type cassette heterochromatin formation"/>
    <property type="evidence" value="ECO:0007669"/>
    <property type="project" value="EnsemblFungi"/>
</dbReference>
<dbReference type="GO" id="GO:0006368">
    <property type="term" value="P:transcription elongation by RNA polymerase II"/>
    <property type="evidence" value="ECO:0007669"/>
    <property type="project" value="EnsemblFungi"/>
</dbReference>
<dbReference type="CDD" id="cd00074">
    <property type="entry name" value="HFD_H2A"/>
    <property type="match status" value="1"/>
</dbReference>
<dbReference type="FunFam" id="1.10.20.10:FF:000005">
    <property type="entry name" value="Histone H2A"/>
    <property type="match status" value="1"/>
</dbReference>
<dbReference type="Gene3D" id="1.10.20.10">
    <property type="entry name" value="Histone, subunit A"/>
    <property type="match status" value="1"/>
</dbReference>
<dbReference type="InterPro" id="IPR009072">
    <property type="entry name" value="Histone-fold"/>
</dbReference>
<dbReference type="InterPro" id="IPR002119">
    <property type="entry name" value="Histone_H2A"/>
</dbReference>
<dbReference type="InterPro" id="IPR007125">
    <property type="entry name" value="Histone_H2A/H2B/H3"/>
</dbReference>
<dbReference type="InterPro" id="IPR032454">
    <property type="entry name" value="Histone_H2A_C"/>
</dbReference>
<dbReference type="InterPro" id="IPR032458">
    <property type="entry name" value="Histone_H2A_CS"/>
</dbReference>
<dbReference type="PANTHER" id="PTHR23430">
    <property type="entry name" value="HISTONE H2A"/>
    <property type="match status" value="1"/>
</dbReference>
<dbReference type="Pfam" id="PF00125">
    <property type="entry name" value="Histone"/>
    <property type="match status" value="1"/>
</dbReference>
<dbReference type="Pfam" id="PF16211">
    <property type="entry name" value="Histone_H2A_C"/>
    <property type="match status" value="1"/>
</dbReference>
<dbReference type="PRINTS" id="PR00620">
    <property type="entry name" value="HISTONEH2A"/>
</dbReference>
<dbReference type="SMART" id="SM00414">
    <property type="entry name" value="H2A"/>
    <property type="match status" value="1"/>
</dbReference>
<dbReference type="SUPFAM" id="SSF47113">
    <property type="entry name" value="Histone-fold"/>
    <property type="match status" value="1"/>
</dbReference>
<dbReference type="PROSITE" id="PS00046">
    <property type="entry name" value="HISTONE_H2A"/>
    <property type="match status" value="1"/>
</dbReference>
<comment type="function">
    <text evidence="1">Variant histone H2A which can replace H2A in some nucleosomes. Nucleosomes wrap and compact DNA into chromatin, limiting DNA accessibility to the cellular machineries which require DNA as a template. Histones thereby play a central role in transcription regulation, DNA repair, DNA replication and chromosomal stability. DNA accessibility is regulated via a complex set of post-translational modifications of histones, also called histone code, and nucleosome remodeling. This variant is enriched at promoters, it may keep them in a repressed state until the appropriate activation signal is received. Near telomeres, it may counteract gene silencing caused by the spread of heterochromatin proteins. Required for the RNA polymerase II and SPT15/TBP recruitment to the target genes. Involved in chromosome stability (By similarity).</text>
</comment>
<comment type="subunit">
    <text evidence="1">The nucleosome is a histone octamer containing two molecules each of H2A, H2B, H3 and H4 assembled in one H3-H4 heterotetramer and two H2A-H2B heterodimers. The octamer wraps approximately 147 bp of DNA. H2A or its variant H2A.Z forms a heterodimer with H2B. H2A.Z associates with the VPS72/SWC2 subunit of the SWR1 chromatin remodeling complex. Also interacts with RBP1/DNA-directed RNA polymerase II largest subunit (By similarity).</text>
</comment>
<comment type="subcellular location">
    <subcellularLocation>
        <location evidence="1">Nucleus</location>
    </subcellularLocation>
    <subcellularLocation>
        <location evidence="1">Chromosome</location>
    </subcellularLocation>
</comment>
<comment type="PTM">
    <text evidence="1">Acetylated once deposited into chromatin.</text>
</comment>
<comment type="similarity">
    <text evidence="3">Belongs to the histone H2A family.</text>
</comment>
<protein>
    <recommendedName>
        <fullName>Histone H2A.Z</fullName>
    </recommendedName>
</protein>
<accession>P0CO01</accession>
<accession>Q55LU3</accession>
<accession>Q5K8Y2</accession>
<gene>
    <name type="primary">HTZ1</name>
    <name type="ordered locus">CNBI2690</name>
</gene>
<proteinExistence type="inferred from homology"/>